<reference key="1">
    <citation type="journal article" date="2008" name="Antimicrob. Agents Chemother.">
        <title>Mutated response regulator graR is responsible for phenotypic conversion of Staphylococcus aureus from heterogeneous vancomycin-intermediate resistance to vancomycin-intermediate resistance.</title>
        <authorList>
            <person name="Neoh H.-M."/>
            <person name="Cui L."/>
            <person name="Yuzawa H."/>
            <person name="Takeuchi F."/>
            <person name="Matsuo M."/>
            <person name="Hiramatsu K."/>
        </authorList>
    </citation>
    <scope>NUCLEOTIDE SEQUENCE [LARGE SCALE GENOMIC DNA]</scope>
    <source>
        <strain>Mu3 / ATCC 700698</strain>
    </source>
</reference>
<keyword id="KW-1003">Cell membrane</keyword>
<keyword id="KW-0408">Iron</keyword>
<keyword id="KW-0472">Membrane</keyword>
<keyword id="KW-0812">Transmembrane</keyword>
<keyword id="KW-1133">Transmembrane helix</keyword>
<keyword id="KW-0813">Transport</keyword>
<comment type="function">
    <text evidence="1">Part of the binding-protein-dependent transport system for heme-iron. Responsible for the translocation of the substrate across the membrane (By similarity).</text>
</comment>
<comment type="subcellular location">
    <subcellularLocation>
        <location evidence="3">Cell membrane</location>
        <topology evidence="3">Multi-pass membrane protein</topology>
    </subcellularLocation>
</comment>
<comment type="induction">
    <text evidence="1">Repressed by fur in the presence of iron.</text>
</comment>
<comment type="similarity">
    <text evidence="3">Belongs to the binding-protein-dependent transport system permease family. FecCD subfamily.</text>
</comment>
<comment type="sequence caution" evidence="3">
    <conflict type="erroneous initiation">
        <sequence resource="EMBL-CDS" id="BAF78008"/>
    </conflict>
</comment>
<organism>
    <name type="scientific">Staphylococcus aureus (strain Mu3 / ATCC 700698)</name>
    <dbReference type="NCBI Taxonomy" id="418127"/>
    <lineage>
        <taxon>Bacteria</taxon>
        <taxon>Bacillati</taxon>
        <taxon>Bacillota</taxon>
        <taxon>Bacilli</taxon>
        <taxon>Bacillales</taxon>
        <taxon>Staphylococcaceae</taxon>
        <taxon>Staphylococcus</taxon>
    </lineage>
</organism>
<sequence length="322" mass="35175">MMIKNKKKLLFLCLLVILIATAYISFVTGTIKLSFNDLFTKFTTGSNEAVDSIIDLRLPRILIALMVGAMLAVSGALLQAALQNPLAEANIIGVSSGALIMRALCMLFIPQLYFYLPLLSFIGGLIPFLIIILLHSKFRFNAVSMILVGVALFVLLNGVLEILTQNPLMKIPQGLTMKIWSDVYILAVSALLGLILTLLLSPKLNLLNLDDIQARSIGFNIDRYRWLTGLLAVFLASATVAIVGQLAFLGIIVPHVVRKLVGGNYRVLIPFSTVIGAWLLLVADLLGRVIQPPLEIPANAILMIVGGPMLIYLICQSQRNRI</sequence>
<accession>A7X154</accession>
<name>ISDF_STAA1</name>
<evidence type="ECO:0000250" key="1"/>
<evidence type="ECO:0000255" key="2"/>
<evidence type="ECO:0000305" key="3"/>
<protein>
    <recommendedName>
        <fullName>Probable heme-iron transport system permease protein IsdF</fullName>
    </recommendedName>
    <alternativeName>
        <fullName>Iron-regulated surface determinant protein F</fullName>
    </alternativeName>
    <alternativeName>
        <fullName>Staphylococcal iron-regulated protein G</fullName>
    </alternativeName>
</protein>
<dbReference type="EMBL" id="AP009324">
    <property type="protein sequence ID" value="BAF78008.1"/>
    <property type="status" value="ALT_INIT"/>
    <property type="molecule type" value="Genomic_DNA"/>
</dbReference>
<dbReference type="SMR" id="A7X154"/>
<dbReference type="KEGG" id="saw:SAHV_1125"/>
<dbReference type="HOGENOM" id="CLU_013016_1_1_9"/>
<dbReference type="GO" id="GO:0005886">
    <property type="term" value="C:plasma membrane"/>
    <property type="evidence" value="ECO:0007669"/>
    <property type="project" value="UniProtKB-SubCell"/>
</dbReference>
<dbReference type="GO" id="GO:0022857">
    <property type="term" value="F:transmembrane transporter activity"/>
    <property type="evidence" value="ECO:0007669"/>
    <property type="project" value="InterPro"/>
</dbReference>
<dbReference type="GO" id="GO:0033214">
    <property type="term" value="P:siderophore-dependent iron import into cell"/>
    <property type="evidence" value="ECO:0007669"/>
    <property type="project" value="TreeGrafter"/>
</dbReference>
<dbReference type="CDD" id="cd06550">
    <property type="entry name" value="TM_ABC_iron-siderophores_like"/>
    <property type="match status" value="1"/>
</dbReference>
<dbReference type="FunFam" id="1.10.3470.10:FF:000001">
    <property type="entry name" value="Vitamin B12 ABC transporter permease BtuC"/>
    <property type="match status" value="1"/>
</dbReference>
<dbReference type="Gene3D" id="1.10.3470.10">
    <property type="entry name" value="ABC transporter involved in vitamin B12 uptake, BtuC"/>
    <property type="match status" value="1"/>
</dbReference>
<dbReference type="InterPro" id="IPR037294">
    <property type="entry name" value="ABC_BtuC-like"/>
</dbReference>
<dbReference type="InterPro" id="IPR000522">
    <property type="entry name" value="ABC_transptr_permease_BtuC"/>
</dbReference>
<dbReference type="PANTHER" id="PTHR30472">
    <property type="entry name" value="FERRIC ENTEROBACTIN TRANSPORT SYSTEM PERMEASE PROTEIN"/>
    <property type="match status" value="1"/>
</dbReference>
<dbReference type="PANTHER" id="PTHR30472:SF21">
    <property type="entry name" value="HEME-IRON TRANSPORT SYSTEM PERMEASE PROTEIN ISDF-RELATED"/>
    <property type="match status" value="1"/>
</dbReference>
<dbReference type="Pfam" id="PF01032">
    <property type="entry name" value="FecCD"/>
    <property type="match status" value="1"/>
</dbReference>
<dbReference type="SUPFAM" id="SSF81345">
    <property type="entry name" value="ABC transporter involved in vitamin B12 uptake, BtuC"/>
    <property type="match status" value="1"/>
</dbReference>
<proteinExistence type="inferred from homology"/>
<feature type="chain" id="PRO_0000372458" description="Probable heme-iron transport system permease protein IsdF">
    <location>
        <begin position="1"/>
        <end position="322"/>
    </location>
</feature>
<feature type="transmembrane region" description="Helical" evidence="2">
    <location>
        <begin position="9"/>
        <end position="29"/>
    </location>
</feature>
<feature type="transmembrane region" description="Helical" evidence="2">
    <location>
        <begin position="61"/>
        <end position="81"/>
    </location>
</feature>
<feature type="transmembrane region" description="Helical" evidence="2">
    <location>
        <begin position="89"/>
        <end position="109"/>
    </location>
</feature>
<feature type="transmembrane region" description="Helical" evidence="2">
    <location>
        <begin position="114"/>
        <end position="134"/>
    </location>
</feature>
<feature type="transmembrane region" description="Helical" evidence="2">
    <location>
        <begin position="143"/>
        <end position="163"/>
    </location>
</feature>
<feature type="transmembrane region" description="Helical" evidence="2">
    <location>
        <begin position="179"/>
        <end position="199"/>
    </location>
</feature>
<feature type="transmembrane region" description="Helical" evidence="2">
    <location>
        <begin position="233"/>
        <end position="253"/>
    </location>
</feature>
<feature type="transmembrane region" description="Helical" evidence="2">
    <location>
        <begin position="267"/>
        <end position="287"/>
    </location>
</feature>
<feature type="transmembrane region" description="Helical" evidence="2">
    <location>
        <begin position="294"/>
        <end position="314"/>
    </location>
</feature>
<gene>
    <name type="primary">isdF</name>
    <name type="synonym">sirG</name>
    <name type="ordered locus">SAHV_1125</name>
</gene>